<proteinExistence type="inferred from homology"/>
<name>DBP3_NEUCR</name>
<comment type="function">
    <text evidence="1">ATP-dependent RNA helicase required for 60S ribosomal subunit synthesis. Involved in efficient pre-rRNA processing, predominantly at site A3, which is necessary for the normal formation of 25S and 5.8S rRNAs (By similarity).</text>
</comment>
<comment type="catalytic activity">
    <reaction>
        <text>ATP + H2O = ADP + phosphate + H(+)</text>
        <dbReference type="Rhea" id="RHEA:13065"/>
        <dbReference type="ChEBI" id="CHEBI:15377"/>
        <dbReference type="ChEBI" id="CHEBI:15378"/>
        <dbReference type="ChEBI" id="CHEBI:30616"/>
        <dbReference type="ChEBI" id="CHEBI:43474"/>
        <dbReference type="ChEBI" id="CHEBI:456216"/>
        <dbReference type="EC" id="3.6.4.13"/>
    </reaction>
</comment>
<comment type="subcellular location">
    <subcellularLocation>
        <location evidence="1">Nucleus</location>
        <location evidence="1">Nucleolus</location>
    </subcellularLocation>
</comment>
<comment type="domain">
    <text>The Q motif is unique to and characteristic of the DEAD box family of RNA helicases and controls ATP binding and hydrolysis.</text>
</comment>
<comment type="similarity">
    <text evidence="5">Belongs to the DEAD box helicase family. DDX5/DBP2 subfamily.</text>
</comment>
<keyword id="KW-0067">ATP-binding</keyword>
<keyword id="KW-0347">Helicase</keyword>
<keyword id="KW-0378">Hydrolase</keyword>
<keyword id="KW-0547">Nucleotide-binding</keyword>
<keyword id="KW-0539">Nucleus</keyword>
<keyword id="KW-1185">Reference proteome</keyword>
<keyword id="KW-0690">Ribosome biogenesis</keyword>
<keyword id="KW-0694">RNA-binding</keyword>
<keyword id="KW-0698">rRNA processing</keyword>
<gene>
    <name type="primary">dbp-3</name>
    <name type="ORF">NCU05782</name>
</gene>
<evidence type="ECO:0000250" key="1"/>
<evidence type="ECO:0000255" key="2">
    <source>
        <dbReference type="PROSITE-ProRule" id="PRU00541"/>
    </source>
</evidence>
<evidence type="ECO:0000255" key="3">
    <source>
        <dbReference type="PROSITE-ProRule" id="PRU00542"/>
    </source>
</evidence>
<evidence type="ECO:0000256" key="4">
    <source>
        <dbReference type="SAM" id="MobiDB-lite"/>
    </source>
</evidence>
<evidence type="ECO:0000305" key="5"/>
<feature type="chain" id="PRO_0000232181" description="ATP-dependent RNA helicase dbp-3">
    <location>
        <begin position="1"/>
        <end position="614"/>
    </location>
</feature>
<feature type="domain" description="Helicase ATP-binding" evidence="2">
    <location>
        <begin position="210"/>
        <end position="394"/>
    </location>
</feature>
<feature type="domain" description="Helicase C-terminal" evidence="3">
    <location>
        <begin position="435"/>
        <end position="584"/>
    </location>
</feature>
<feature type="region of interest" description="Disordered" evidence="4">
    <location>
        <begin position="1"/>
        <end position="138"/>
    </location>
</feature>
<feature type="short sequence motif" description="Q motif">
    <location>
        <begin position="180"/>
        <end position="207"/>
    </location>
</feature>
<feature type="short sequence motif" description="DEAD box">
    <location>
        <begin position="340"/>
        <end position="343"/>
    </location>
</feature>
<feature type="compositionally biased region" description="Basic and acidic residues" evidence="4">
    <location>
        <begin position="9"/>
        <end position="36"/>
    </location>
</feature>
<feature type="compositionally biased region" description="Basic residues" evidence="4">
    <location>
        <begin position="37"/>
        <end position="58"/>
    </location>
</feature>
<feature type="compositionally biased region" description="Basic residues" evidence="4">
    <location>
        <begin position="91"/>
        <end position="109"/>
    </location>
</feature>
<feature type="compositionally biased region" description="Low complexity" evidence="4">
    <location>
        <begin position="117"/>
        <end position="138"/>
    </location>
</feature>
<feature type="binding site" evidence="2">
    <location>
        <begin position="223"/>
        <end position="230"/>
    </location>
    <ligand>
        <name>ATP</name>
        <dbReference type="ChEBI" id="CHEBI:30616"/>
    </ligand>
</feature>
<protein>
    <recommendedName>
        <fullName>ATP-dependent RNA helicase dbp-3</fullName>
        <ecNumber>3.6.4.13</ecNumber>
    </recommendedName>
</protein>
<reference key="1">
    <citation type="journal article" date="2003" name="Nature">
        <title>The genome sequence of the filamentous fungus Neurospora crassa.</title>
        <authorList>
            <person name="Galagan J.E."/>
            <person name="Calvo S.E."/>
            <person name="Borkovich K.A."/>
            <person name="Selker E.U."/>
            <person name="Read N.D."/>
            <person name="Jaffe D.B."/>
            <person name="FitzHugh W."/>
            <person name="Ma L.-J."/>
            <person name="Smirnov S."/>
            <person name="Purcell S."/>
            <person name="Rehman B."/>
            <person name="Elkins T."/>
            <person name="Engels R."/>
            <person name="Wang S."/>
            <person name="Nielsen C.B."/>
            <person name="Butler J."/>
            <person name="Endrizzi M."/>
            <person name="Qui D."/>
            <person name="Ianakiev P."/>
            <person name="Bell-Pedersen D."/>
            <person name="Nelson M.A."/>
            <person name="Werner-Washburne M."/>
            <person name="Selitrennikoff C.P."/>
            <person name="Kinsey J.A."/>
            <person name="Braun E.L."/>
            <person name="Zelter A."/>
            <person name="Schulte U."/>
            <person name="Kothe G.O."/>
            <person name="Jedd G."/>
            <person name="Mewes H.-W."/>
            <person name="Staben C."/>
            <person name="Marcotte E."/>
            <person name="Greenberg D."/>
            <person name="Roy A."/>
            <person name="Foley K."/>
            <person name="Naylor J."/>
            <person name="Stange-Thomann N."/>
            <person name="Barrett R."/>
            <person name="Gnerre S."/>
            <person name="Kamal M."/>
            <person name="Kamvysselis M."/>
            <person name="Mauceli E.W."/>
            <person name="Bielke C."/>
            <person name="Rudd S."/>
            <person name="Frishman D."/>
            <person name="Krystofova S."/>
            <person name="Rasmussen C."/>
            <person name="Metzenberg R.L."/>
            <person name="Perkins D.D."/>
            <person name="Kroken S."/>
            <person name="Cogoni C."/>
            <person name="Macino G."/>
            <person name="Catcheside D.E.A."/>
            <person name="Li W."/>
            <person name="Pratt R.J."/>
            <person name="Osmani S.A."/>
            <person name="DeSouza C.P.C."/>
            <person name="Glass N.L."/>
            <person name="Orbach M.J."/>
            <person name="Berglund J.A."/>
            <person name="Voelker R."/>
            <person name="Yarden O."/>
            <person name="Plamann M."/>
            <person name="Seiler S."/>
            <person name="Dunlap J.C."/>
            <person name="Radford A."/>
            <person name="Aramayo R."/>
            <person name="Natvig D.O."/>
            <person name="Alex L.A."/>
            <person name="Mannhaupt G."/>
            <person name="Ebbole D.J."/>
            <person name="Freitag M."/>
            <person name="Paulsen I."/>
            <person name="Sachs M.S."/>
            <person name="Lander E.S."/>
            <person name="Nusbaum C."/>
            <person name="Birren B.W."/>
        </authorList>
    </citation>
    <scope>NUCLEOTIDE SEQUENCE [LARGE SCALE GENOMIC DNA]</scope>
    <source>
        <strain>ATCC 24698 / 74-OR23-1A / CBS 708.71 / DSM 1257 / FGSC 987</strain>
    </source>
</reference>
<organism>
    <name type="scientific">Neurospora crassa (strain ATCC 24698 / 74-OR23-1A / CBS 708.71 / DSM 1257 / FGSC 987)</name>
    <dbReference type="NCBI Taxonomy" id="367110"/>
    <lineage>
        <taxon>Eukaryota</taxon>
        <taxon>Fungi</taxon>
        <taxon>Dikarya</taxon>
        <taxon>Ascomycota</taxon>
        <taxon>Pezizomycotina</taxon>
        <taxon>Sordariomycetes</taxon>
        <taxon>Sordariomycetidae</taxon>
        <taxon>Sordariales</taxon>
        <taxon>Sordariaceae</taxon>
        <taxon>Neurospora</taxon>
    </lineage>
</organism>
<dbReference type="EC" id="3.6.4.13"/>
<dbReference type="EMBL" id="CM002242">
    <property type="protein sequence ID" value="EAA30806.1"/>
    <property type="molecule type" value="Genomic_DNA"/>
</dbReference>
<dbReference type="RefSeq" id="XP_960042.1">
    <property type="nucleotide sequence ID" value="XM_954949.2"/>
</dbReference>
<dbReference type="SMR" id="Q7S5R1"/>
<dbReference type="FunCoup" id="Q7S5R1">
    <property type="interactions" value="369"/>
</dbReference>
<dbReference type="STRING" id="367110.Q7S5R1"/>
<dbReference type="PaxDb" id="5141-EFNCRP00000005739"/>
<dbReference type="EnsemblFungi" id="EAA30806">
    <property type="protein sequence ID" value="EAA30806"/>
    <property type="gene ID" value="NCU05782"/>
</dbReference>
<dbReference type="GeneID" id="3876205"/>
<dbReference type="KEGG" id="ncr:NCU05782"/>
<dbReference type="VEuPathDB" id="FungiDB:NCU05782"/>
<dbReference type="HOGENOM" id="CLU_003041_1_5_1"/>
<dbReference type="InParanoid" id="Q7S5R1"/>
<dbReference type="OMA" id="KKTHDMY"/>
<dbReference type="OrthoDB" id="196131at2759"/>
<dbReference type="Proteomes" id="UP000001805">
    <property type="component" value="Chromosome 7, Linkage Group VII"/>
</dbReference>
<dbReference type="GO" id="GO:0005730">
    <property type="term" value="C:nucleolus"/>
    <property type="evidence" value="ECO:0000318"/>
    <property type="project" value="GO_Central"/>
</dbReference>
<dbReference type="GO" id="GO:0030687">
    <property type="term" value="C:preribosome, large subunit precursor"/>
    <property type="evidence" value="ECO:0007669"/>
    <property type="project" value="EnsemblFungi"/>
</dbReference>
<dbReference type="GO" id="GO:0005524">
    <property type="term" value="F:ATP binding"/>
    <property type="evidence" value="ECO:0007669"/>
    <property type="project" value="UniProtKB-KW"/>
</dbReference>
<dbReference type="GO" id="GO:0016887">
    <property type="term" value="F:ATP hydrolysis activity"/>
    <property type="evidence" value="ECO:0007669"/>
    <property type="project" value="RHEA"/>
</dbReference>
<dbReference type="GO" id="GO:0003729">
    <property type="term" value="F:mRNA binding"/>
    <property type="evidence" value="ECO:0000318"/>
    <property type="project" value="GO_Central"/>
</dbReference>
<dbReference type="GO" id="GO:0003724">
    <property type="term" value="F:RNA helicase activity"/>
    <property type="evidence" value="ECO:0000318"/>
    <property type="project" value="GO_Central"/>
</dbReference>
<dbReference type="GO" id="GO:0000464">
    <property type="term" value="P:endonucleolytic cleavage in ITS1 upstream of 5.8S rRNA from tricistronic rRNA transcript (SSU-rRNA, 5.8S rRNA, LSU-rRNA)"/>
    <property type="evidence" value="ECO:0007669"/>
    <property type="project" value="EnsemblFungi"/>
</dbReference>
<dbReference type="GO" id="GO:0006364">
    <property type="term" value="P:rRNA processing"/>
    <property type="evidence" value="ECO:0000318"/>
    <property type="project" value="GO_Central"/>
</dbReference>
<dbReference type="CDD" id="cd00268">
    <property type="entry name" value="DEADc"/>
    <property type="match status" value="1"/>
</dbReference>
<dbReference type="CDD" id="cd18787">
    <property type="entry name" value="SF2_C_DEAD"/>
    <property type="match status" value="1"/>
</dbReference>
<dbReference type="FunFam" id="3.40.50.300:FF:000008">
    <property type="entry name" value="ATP-dependent RNA helicase RhlB"/>
    <property type="match status" value="1"/>
</dbReference>
<dbReference type="Gene3D" id="3.40.50.300">
    <property type="entry name" value="P-loop containing nucleotide triphosphate hydrolases"/>
    <property type="match status" value="2"/>
</dbReference>
<dbReference type="InterPro" id="IPR011545">
    <property type="entry name" value="DEAD/DEAH_box_helicase_dom"/>
</dbReference>
<dbReference type="InterPro" id="IPR014001">
    <property type="entry name" value="Helicase_ATP-bd"/>
</dbReference>
<dbReference type="InterPro" id="IPR001650">
    <property type="entry name" value="Helicase_C-like"/>
</dbReference>
<dbReference type="InterPro" id="IPR027417">
    <property type="entry name" value="P-loop_NTPase"/>
</dbReference>
<dbReference type="InterPro" id="IPR000629">
    <property type="entry name" value="RNA-helicase_DEAD-box_CS"/>
</dbReference>
<dbReference type="PANTHER" id="PTHR47958">
    <property type="entry name" value="ATP-DEPENDENT RNA HELICASE DBP3"/>
    <property type="match status" value="1"/>
</dbReference>
<dbReference type="Pfam" id="PF00270">
    <property type="entry name" value="DEAD"/>
    <property type="match status" value="1"/>
</dbReference>
<dbReference type="Pfam" id="PF00271">
    <property type="entry name" value="Helicase_C"/>
    <property type="match status" value="1"/>
</dbReference>
<dbReference type="SMART" id="SM00487">
    <property type="entry name" value="DEXDc"/>
    <property type="match status" value="1"/>
</dbReference>
<dbReference type="SMART" id="SM00490">
    <property type="entry name" value="HELICc"/>
    <property type="match status" value="1"/>
</dbReference>
<dbReference type="SUPFAM" id="SSF52540">
    <property type="entry name" value="P-loop containing nucleoside triphosphate hydrolases"/>
    <property type="match status" value="2"/>
</dbReference>
<dbReference type="PROSITE" id="PS00039">
    <property type="entry name" value="DEAD_ATP_HELICASE"/>
    <property type="match status" value="1"/>
</dbReference>
<dbReference type="PROSITE" id="PS51192">
    <property type="entry name" value="HELICASE_ATP_BIND_1"/>
    <property type="match status" value="1"/>
</dbReference>
<dbReference type="PROSITE" id="PS51194">
    <property type="entry name" value="HELICASE_CTER"/>
    <property type="match status" value="1"/>
</dbReference>
<dbReference type="PROSITE" id="PS51195">
    <property type="entry name" value="Q_MOTIF"/>
    <property type="match status" value="1"/>
</dbReference>
<accession>Q7S5R1</accession>
<sequence>MSSTKKHSRSEGEEKDARLAKKVKTDETPVDGEVKKERKKDKKEKKDKKEKKDKKSKKEKKDQDESPATESTEDVSMPDAAAEPVADKKEKKEKKDKKEKKDKKEKKAKKSDESTTEESTSASKATTNGTTTPAASTNGAYTYKQADALSALPESEIETFLKEKEIVIKDPSSSNLRPIMNFSQLPQSNLISKNPFAAYTNPTPIQSASWPFSLSGRDVIGIAETGSGKTMAFSLPCVESLASRPKPKFNSRDRTAHPRAVIVSPTRELAMQTHAALSGLASLVGLSAVCIFGGSDKNEQRNLLYKNNGVDIITATPGRLKDFLSEGSISLANVSFAVLDEADRMLDRGFSEDIKLILSGCPPKEQRQTLMFTATWPLDIQKLAESYMINPAQVTIGHRTRAGGDGEGNGNIELQANSRIEQKVEVVDPRGKEFRLYELLKEAQKGSQKDDRILVFCLYKKEAVRVEQFLSRKGIKVASIHGDLRQDQRTRSLEAFKSGTTTVLVATDVAARGLDIPEVKLVINVTFPLTIEDYVHRIGRTGRAGKLGKAITLFTEHDKAHSGSLVNILRAAKQPVPEELLKFGTTVKKKAHDAYGSFYKDIDPNKKATKITFD</sequence>